<sequence length="560" mass="59782">MTPQKSDACSDPVYTVGDYLLDRLAELGVSEIFGVPGDYNLQFLDHIVAHPTIRWVGSANELNAGYAADGYGRLRGMSAVVTTFGVGELSVTNAIAGSYAEHVPVVHIVGGPTKDAQGTRRALHHSLGDGDFEHFLRISREITCAQANLMPATAGREIDRVLSEVREQKRPGYILLSSDVARFPTEPPAAPLPRYPGGTSPRALSLFTKAAIELIADHQLTVLADLLVHRLQAVKELEALLAADVVPHATLMWGKSLLDESSPNFLGIYAGAASAERVRAAIEGAPVLVTAGVVFTNMVSGFFSQRIDPARTIDIGQYQSSVADQVFAPLEMSAALQALATILTGRGISSPPVVPPPAEPPPAMPARDEPLTQQMVWDRVCSALTPGNVVLADQGTSFYGMADHRLPQGVTFIGQPLWGSIGYTLPAAVGAAVAHPDRRTVLLIGDGAAQLTVQELGTFSREGLSPVIVVVNNDGYTVERAIHGETAPYNDIVSWNWTELPSALGVTNHLAFRAQTYGQLDDALTVAAARRDRMVLVEVVLPRLEIPRLLGQLVGSMAPQ</sequence>
<feature type="chain" id="PRO_0000428430" description="Alpha-keto-acid decarboxylase">
    <location>
        <begin position="1"/>
        <end position="560"/>
    </location>
</feature>
<feature type="region of interest" description="Thiamine pyrophosphate binding" evidence="1">
    <location>
        <begin position="396"/>
        <end position="478"/>
    </location>
</feature>
<feature type="binding site" evidence="1">
    <location>
        <position position="61"/>
    </location>
    <ligand>
        <name>thiamine diphosphate</name>
        <dbReference type="ChEBI" id="CHEBI:58937"/>
    </ligand>
</feature>
<feature type="binding site" evidence="1">
    <location>
        <position position="446"/>
    </location>
    <ligand>
        <name>Mg(2+)</name>
        <dbReference type="ChEBI" id="CHEBI:18420"/>
    </ligand>
</feature>
<feature type="binding site" evidence="1">
    <location>
        <position position="473"/>
    </location>
    <ligand>
        <name>Mg(2+)</name>
        <dbReference type="ChEBI" id="CHEBI:18420"/>
    </ligand>
</feature>
<feature type="binding site" evidence="1">
    <location>
        <position position="475"/>
    </location>
    <ligand>
        <name>Mg(2+)</name>
        <dbReference type="ChEBI" id="CHEBI:18420"/>
    </ligand>
</feature>
<protein>
    <recommendedName>
        <fullName>Alpha-keto-acid decarboxylase</fullName>
        <shortName>KDC</shortName>
        <ecNumber>4.1.1.-</ecNumber>
    </recommendedName>
</protein>
<accession>P9WG36</accession>
<accession>L0T537</accession>
<accession>O53865</accession>
<accession>Q7D958</accession>
<reference key="1">
    <citation type="journal article" date="2002" name="J. Bacteriol.">
        <title>Whole-genome comparison of Mycobacterium tuberculosis clinical and laboratory strains.</title>
        <authorList>
            <person name="Fleischmann R.D."/>
            <person name="Alland D."/>
            <person name="Eisen J.A."/>
            <person name="Carpenter L."/>
            <person name="White O."/>
            <person name="Peterson J.D."/>
            <person name="DeBoy R.T."/>
            <person name="Dodson R.J."/>
            <person name="Gwinn M.L."/>
            <person name="Haft D.H."/>
            <person name="Hickey E.K."/>
            <person name="Kolonay J.F."/>
            <person name="Nelson W.C."/>
            <person name="Umayam L.A."/>
            <person name="Ermolaeva M.D."/>
            <person name="Salzberg S.L."/>
            <person name="Delcher A."/>
            <person name="Utterback T.R."/>
            <person name="Weidman J.F."/>
            <person name="Khouri H.M."/>
            <person name="Gill J."/>
            <person name="Mikula A."/>
            <person name="Bishai W."/>
            <person name="Jacobs W.R. Jr."/>
            <person name="Venter J.C."/>
            <person name="Fraser C.M."/>
        </authorList>
    </citation>
    <scope>NUCLEOTIDE SEQUENCE [LARGE SCALE GENOMIC DNA]</scope>
    <source>
        <strain>CDC 1551 / Oshkosh</strain>
    </source>
</reference>
<keyword id="KW-0021">Allosteric enzyme</keyword>
<keyword id="KW-0210">Decarboxylase</keyword>
<keyword id="KW-0456">Lyase</keyword>
<keyword id="KW-0460">Magnesium</keyword>
<keyword id="KW-0479">Metal-binding</keyword>
<keyword id="KW-1185">Reference proteome</keyword>
<keyword id="KW-0786">Thiamine pyrophosphate</keyword>
<name>KDC_MYCTO</name>
<evidence type="ECO:0000250" key="1"/>
<evidence type="ECO:0000305" key="2"/>
<comment type="function">
    <text evidence="1">Decarboxylates branched-chain and aromatic alpha-keto acids to aldehydes.</text>
</comment>
<comment type="cofactor">
    <cofactor evidence="1">
        <name>a metal cation</name>
        <dbReference type="ChEBI" id="CHEBI:25213"/>
    </cofactor>
    <text evidence="1">Binds 1 metal ion per subunit.</text>
</comment>
<comment type="cofactor">
    <cofactor evidence="1">
        <name>thiamine diphosphate</name>
        <dbReference type="ChEBI" id="CHEBI:58937"/>
    </cofactor>
    <text evidence="1">Binds 1 thiamine pyrophosphate per subunit.</text>
</comment>
<comment type="similarity">
    <text evidence="2">Belongs to the TPP enzyme family.</text>
</comment>
<proteinExistence type="inferred from homology"/>
<dbReference type="EC" id="4.1.1.-"/>
<dbReference type="EMBL" id="AE000516">
    <property type="protein sequence ID" value="AAK45117.1"/>
    <property type="molecule type" value="Genomic_DNA"/>
</dbReference>
<dbReference type="PIR" id="E70814">
    <property type="entry name" value="E70814"/>
</dbReference>
<dbReference type="SMR" id="P9WG36"/>
<dbReference type="KEGG" id="mtc:MT0876"/>
<dbReference type="PATRIC" id="fig|83331.31.peg.941"/>
<dbReference type="HOGENOM" id="CLU_013748_0_2_11"/>
<dbReference type="Proteomes" id="UP000001020">
    <property type="component" value="Chromosome"/>
</dbReference>
<dbReference type="GO" id="GO:0005829">
    <property type="term" value="C:cytosol"/>
    <property type="evidence" value="ECO:0007669"/>
    <property type="project" value="TreeGrafter"/>
</dbReference>
<dbReference type="GO" id="GO:0000287">
    <property type="term" value="F:magnesium ion binding"/>
    <property type="evidence" value="ECO:0007669"/>
    <property type="project" value="InterPro"/>
</dbReference>
<dbReference type="GO" id="GO:0004737">
    <property type="term" value="F:pyruvate decarboxylase activity"/>
    <property type="evidence" value="ECO:0007669"/>
    <property type="project" value="TreeGrafter"/>
</dbReference>
<dbReference type="GO" id="GO:0030976">
    <property type="term" value="F:thiamine pyrophosphate binding"/>
    <property type="evidence" value="ECO:0007669"/>
    <property type="project" value="InterPro"/>
</dbReference>
<dbReference type="GO" id="GO:0000949">
    <property type="term" value="P:aromatic amino acid family catabolic process to alcohol via Ehrlich pathway"/>
    <property type="evidence" value="ECO:0007669"/>
    <property type="project" value="TreeGrafter"/>
</dbReference>
<dbReference type="CDD" id="cd02005">
    <property type="entry name" value="TPP_PDC_IPDC"/>
    <property type="match status" value="1"/>
</dbReference>
<dbReference type="CDD" id="cd07038">
    <property type="entry name" value="TPP_PYR_PDC_IPDC_like"/>
    <property type="match status" value="1"/>
</dbReference>
<dbReference type="FunFam" id="3.40.50.1220:FF:000042">
    <property type="entry name" value="Alpha-keto-acid decarboxylase"/>
    <property type="match status" value="1"/>
</dbReference>
<dbReference type="FunFam" id="3.40.50.970:FF:000019">
    <property type="entry name" value="Pyruvate decarboxylase isozyme"/>
    <property type="match status" value="1"/>
</dbReference>
<dbReference type="FunFam" id="3.40.50.970:FF:000024">
    <property type="entry name" value="Pyruvate decarboxylase isozyme"/>
    <property type="match status" value="1"/>
</dbReference>
<dbReference type="Gene3D" id="3.40.50.970">
    <property type="match status" value="2"/>
</dbReference>
<dbReference type="Gene3D" id="3.40.50.1220">
    <property type="entry name" value="TPP-binding domain"/>
    <property type="match status" value="1"/>
</dbReference>
<dbReference type="InterPro" id="IPR029035">
    <property type="entry name" value="DHS-like_NAD/FAD-binding_dom"/>
</dbReference>
<dbReference type="InterPro" id="IPR012110">
    <property type="entry name" value="PDC/IPDC-like"/>
</dbReference>
<dbReference type="InterPro" id="IPR029061">
    <property type="entry name" value="THDP-binding"/>
</dbReference>
<dbReference type="InterPro" id="IPR012000">
    <property type="entry name" value="Thiamin_PyroP_enz_cen_dom"/>
</dbReference>
<dbReference type="InterPro" id="IPR012001">
    <property type="entry name" value="Thiamin_PyroP_enz_TPP-bd_dom"/>
</dbReference>
<dbReference type="InterPro" id="IPR000399">
    <property type="entry name" value="TPP-bd_CS"/>
</dbReference>
<dbReference type="InterPro" id="IPR011766">
    <property type="entry name" value="TPP_enzyme_TPP-bd"/>
</dbReference>
<dbReference type="InterPro" id="IPR047214">
    <property type="entry name" value="TPP_PDC_IPDC"/>
</dbReference>
<dbReference type="InterPro" id="IPR047213">
    <property type="entry name" value="TPP_PYR_PDC_IPDC-like"/>
</dbReference>
<dbReference type="PANTHER" id="PTHR43452">
    <property type="entry name" value="PYRUVATE DECARBOXYLASE"/>
    <property type="match status" value="1"/>
</dbReference>
<dbReference type="PANTHER" id="PTHR43452:SF30">
    <property type="entry name" value="PYRUVATE DECARBOXYLASE ISOZYME 1-RELATED"/>
    <property type="match status" value="1"/>
</dbReference>
<dbReference type="Pfam" id="PF02775">
    <property type="entry name" value="TPP_enzyme_C"/>
    <property type="match status" value="1"/>
</dbReference>
<dbReference type="Pfam" id="PF00205">
    <property type="entry name" value="TPP_enzyme_M"/>
    <property type="match status" value="1"/>
</dbReference>
<dbReference type="Pfam" id="PF02776">
    <property type="entry name" value="TPP_enzyme_N"/>
    <property type="match status" value="1"/>
</dbReference>
<dbReference type="PIRSF" id="PIRSF036565">
    <property type="entry name" value="Pyruvt_ip_decrb"/>
    <property type="match status" value="1"/>
</dbReference>
<dbReference type="SUPFAM" id="SSF52467">
    <property type="entry name" value="DHS-like NAD/FAD-binding domain"/>
    <property type="match status" value="1"/>
</dbReference>
<dbReference type="SUPFAM" id="SSF52518">
    <property type="entry name" value="Thiamin diphosphate-binding fold (THDP-binding)"/>
    <property type="match status" value="2"/>
</dbReference>
<dbReference type="PROSITE" id="PS00187">
    <property type="entry name" value="TPP_ENZYMES"/>
    <property type="match status" value="1"/>
</dbReference>
<gene>
    <name type="primary">kdc</name>
    <name type="ordered locus">MT0876</name>
</gene>
<organism>
    <name type="scientific">Mycobacterium tuberculosis (strain CDC 1551 / Oshkosh)</name>
    <dbReference type="NCBI Taxonomy" id="83331"/>
    <lineage>
        <taxon>Bacteria</taxon>
        <taxon>Bacillati</taxon>
        <taxon>Actinomycetota</taxon>
        <taxon>Actinomycetes</taxon>
        <taxon>Mycobacteriales</taxon>
        <taxon>Mycobacteriaceae</taxon>
        <taxon>Mycobacterium</taxon>
        <taxon>Mycobacterium tuberculosis complex</taxon>
    </lineage>
</organism>